<proteinExistence type="inferred from homology"/>
<evidence type="ECO:0000255" key="1">
    <source>
        <dbReference type="HAMAP-Rule" id="MF_01342"/>
    </source>
</evidence>
<evidence type="ECO:0000305" key="2"/>
<gene>
    <name evidence="1" type="primary">rplP</name>
    <name type="ordered locus">YPN_3852</name>
    <name type="ORF">YP516_4375</name>
</gene>
<protein>
    <recommendedName>
        <fullName evidence="1">Large ribosomal subunit protein uL16</fullName>
    </recommendedName>
    <alternativeName>
        <fullName evidence="2">50S ribosomal protein L16</fullName>
    </alternativeName>
</protein>
<feature type="chain" id="PRO_1000054734" description="Large ribosomal subunit protein uL16">
    <location>
        <begin position="1"/>
        <end position="136"/>
    </location>
</feature>
<organism>
    <name type="scientific">Yersinia pestis bv. Antiqua (strain Nepal516)</name>
    <dbReference type="NCBI Taxonomy" id="377628"/>
    <lineage>
        <taxon>Bacteria</taxon>
        <taxon>Pseudomonadati</taxon>
        <taxon>Pseudomonadota</taxon>
        <taxon>Gammaproteobacteria</taxon>
        <taxon>Enterobacterales</taxon>
        <taxon>Yersiniaceae</taxon>
        <taxon>Yersinia</taxon>
    </lineage>
</organism>
<keyword id="KW-0687">Ribonucleoprotein</keyword>
<keyword id="KW-0689">Ribosomal protein</keyword>
<keyword id="KW-0694">RNA-binding</keyword>
<keyword id="KW-0699">rRNA-binding</keyword>
<keyword id="KW-0820">tRNA-binding</keyword>
<dbReference type="EMBL" id="CP000305">
    <property type="protein sequence ID" value="ABG20179.1"/>
    <property type="molecule type" value="Genomic_DNA"/>
</dbReference>
<dbReference type="EMBL" id="ACNQ01000019">
    <property type="protein sequence ID" value="EEO74767.1"/>
    <property type="molecule type" value="Genomic_DNA"/>
</dbReference>
<dbReference type="RefSeq" id="WP_002218940.1">
    <property type="nucleotide sequence ID" value="NZ_ACNQ01000019.1"/>
</dbReference>
<dbReference type="SMR" id="Q1CCV1"/>
<dbReference type="GeneID" id="97454238"/>
<dbReference type="KEGG" id="ypn:YPN_3852"/>
<dbReference type="HOGENOM" id="CLU_078858_2_1_6"/>
<dbReference type="Proteomes" id="UP000008936">
    <property type="component" value="Chromosome"/>
</dbReference>
<dbReference type="GO" id="GO:0022625">
    <property type="term" value="C:cytosolic large ribosomal subunit"/>
    <property type="evidence" value="ECO:0007669"/>
    <property type="project" value="TreeGrafter"/>
</dbReference>
<dbReference type="GO" id="GO:0019843">
    <property type="term" value="F:rRNA binding"/>
    <property type="evidence" value="ECO:0007669"/>
    <property type="project" value="UniProtKB-UniRule"/>
</dbReference>
<dbReference type="GO" id="GO:0003735">
    <property type="term" value="F:structural constituent of ribosome"/>
    <property type="evidence" value="ECO:0007669"/>
    <property type="project" value="InterPro"/>
</dbReference>
<dbReference type="GO" id="GO:0000049">
    <property type="term" value="F:tRNA binding"/>
    <property type="evidence" value="ECO:0007669"/>
    <property type="project" value="UniProtKB-KW"/>
</dbReference>
<dbReference type="GO" id="GO:0006412">
    <property type="term" value="P:translation"/>
    <property type="evidence" value="ECO:0007669"/>
    <property type="project" value="UniProtKB-UniRule"/>
</dbReference>
<dbReference type="CDD" id="cd01433">
    <property type="entry name" value="Ribosomal_L16_L10e"/>
    <property type="match status" value="1"/>
</dbReference>
<dbReference type="FunFam" id="3.90.1170.10:FF:000001">
    <property type="entry name" value="50S ribosomal protein L16"/>
    <property type="match status" value="1"/>
</dbReference>
<dbReference type="Gene3D" id="3.90.1170.10">
    <property type="entry name" value="Ribosomal protein L10e/L16"/>
    <property type="match status" value="1"/>
</dbReference>
<dbReference type="HAMAP" id="MF_01342">
    <property type="entry name" value="Ribosomal_uL16"/>
    <property type="match status" value="1"/>
</dbReference>
<dbReference type="InterPro" id="IPR047873">
    <property type="entry name" value="Ribosomal_uL16"/>
</dbReference>
<dbReference type="InterPro" id="IPR000114">
    <property type="entry name" value="Ribosomal_uL16_bact-type"/>
</dbReference>
<dbReference type="InterPro" id="IPR020798">
    <property type="entry name" value="Ribosomal_uL16_CS"/>
</dbReference>
<dbReference type="InterPro" id="IPR016180">
    <property type="entry name" value="Ribosomal_uL16_dom"/>
</dbReference>
<dbReference type="InterPro" id="IPR036920">
    <property type="entry name" value="Ribosomal_uL16_sf"/>
</dbReference>
<dbReference type="NCBIfam" id="TIGR01164">
    <property type="entry name" value="rplP_bact"/>
    <property type="match status" value="1"/>
</dbReference>
<dbReference type="PANTHER" id="PTHR12220">
    <property type="entry name" value="50S/60S RIBOSOMAL PROTEIN L16"/>
    <property type="match status" value="1"/>
</dbReference>
<dbReference type="PANTHER" id="PTHR12220:SF13">
    <property type="entry name" value="LARGE RIBOSOMAL SUBUNIT PROTEIN UL16M"/>
    <property type="match status" value="1"/>
</dbReference>
<dbReference type="Pfam" id="PF00252">
    <property type="entry name" value="Ribosomal_L16"/>
    <property type="match status" value="1"/>
</dbReference>
<dbReference type="PRINTS" id="PR00060">
    <property type="entry name" value="RIBOSOMALL16"/>
</dbReference>
<dbReference type="SUPFAM" id="SSF54686">
    <property type="entry name" value="Ribosomal protein L16p/L10e"/>
    <property type="match status" value="1"/>
</dbReference>
<dbReference type="PROSITE" id="PS00586">
    <property type="entry name" value="RIBOSOMAL_L16_1"/>
    <property type="match status" value="1"/>
</dbReference>
<dbReference type="PROSITE" id="PS00701">
    <property type="entry name" value="RIBOSOMAL_L16_2"/>
    <property type="match status" value="1"/>
</dbReference>
<name>RL16_YERPN</name>
<sequence>MLQPKRTKFRKMHKGRNRGLAQGTDVSFGEFGLKACGRCRLTARQIEAARRAMTRAIKRQGKVWIRVFPDKPITEKPLEVRMGKGKGNVEYWVALIQPGKVLFEMAGVPEETAREAFKLAAAKLPVGTTFVTKTVM</sequence>
<comment type="function">
    <text evidence="1">Binds 23S rRNA and is also seen to make contacts with the A and possibly P site tRNAs.</text>
</comment>
<comment type="subunit">
    <text evidence="1">Part of the 50S ribosomal subunit.</text>
</comment>
<comment type="similarity">
    <text evidence="1">Belongs to the universal ribosomal protein uL16 family.</text>
</comment>
<accession>Q1CCV1</accession>
<accession>D1Q2L4</accession>
<reference key="1">
    <citation type="journal article" date="2006" name="J. Bacteriol.">
        <title>Complete genome sequence of Yersinia pestis strains Antiqua and Nepal516: evidence of gene reduction in an emerging pathogen.</title>
        <authorList>
            <person name="Chain P.S.G."/>
            <person name="Hu P."/>
            <person name="Malfatti S.A."/>
            <person name="Radnedge L."/>
            <person name="Larimer F."/>
            <person name="Vergez L.M."/>
            <person name="Worsham P."/>
            <person name="Chu M.C."/>
            <person name="Andersen G.L."/>
        </authorList>
    </citation>
    <scope>NUCLEOTIDE SEQUENCE [LARGE SCALE GENOMIC DNA]</scope>
    <source>
        <strain>Nepal516</strain>
    </source>
</reference>
<reference key="2">
    <citation type="submission" date="2009-04" db="EMBL/GenBank/DDBJ databases">
        <title>Yersinia pestis Nepal516A whole genome shotgun sequencing project.</title>
        <authorList>
            <person name="Plunkett G. III"/>
            <person name="Anderson B.D."/>
            <person name="Baumler D.J."/>
            <person name="Burland V."/>
            <person name="Cabot E.L."/>
            <person name="Glasner J.D."/>
            <person name="Mau B."/>
            <person name="Neeno-Eckwall E."/>
            <person name="Perna N.T."/>
            <person name="Munk A.C."/>
            <person name="Tapia R."/>
            <person name="Green L.D."/>
            <person name="Rogers Y.C."/>
            <person name="Detter J.C."/>
            <person name="Bruce D.C."/>
            <person name="Brettin T.S."/>
        </authorList>
    </citation>
    <scope>NUCLEOTIDE SEQUENCE [LARGE SCALE GENOMIC DNA]</scope>
    <source>
        <strain>Nepal516</strain>
    </source>
</reference>